<organism>
    <name type="scientific">Saccharomyces cerevisiae (strain ATCC 204508 / S288c)</name>
    <name type="common">Baker's yeast</name>
    <dbReference type="NCBI Taxonomy" id="559292"/>
    <lineage>
        <taxon>Eukaryota</taxon>
        <taxon>Fungi</taxon>
        <taxon>Dikarya</taxon>
        <taxon>Ascomycota</taxon>
        <taxon>Saccharomycotina</taxon>
        <taxon>Saccharomycetes</taxon>
        <taxon>Saccharomycetales</taxon>
        <taxon>Saccharomycetaceae</taxon>
        <taxon>Saccharomyces</taxon>
    </lineage>
</organism>
<feature type="chain" id="PRO_0000255971" description="Protein RAD61">
    <location>
        <begin position="1"/>
        <end position="647"/>
    </location>
</feature>
<feature type="region of interest" description="Disordered" evidence="1">
    <location>
        <begin position="1"/>
        <end position="90"/>
    </location>
</feature>
<feature type="compositionally biased region" description="Polar residues" evidence="1">
    <location>
        <begin position="66"/>
        <end position="82"/>
    </location>
</feature>
<proteinExistence type="evidence at protein level"/>
<gene>
    <name type="primary">RAD61</name>
    <name type="ordered locus">YDR014W</name>
    <name type="ORF">PZB647</name>
</gene>
<sequence length="647" mass="74722">MRAYGKRGPVLRTPFRSNKGLPSSSDVEFSDDDVNSVIPDVSSTISSSIADHPIEGLLDEPRKAQDSSSSFDGANEKPSSQLDSKRNDQNVKIITSSDTSMAFMKDEKLSAFNFLDGSKASKRKRRRTYQKHDANITSSIEPDVQDEDSITMHNEFESIRKIYNDINEFILKLPRADDDILNKMLENEMKMDDSIENNSIRTSKDKKYGKFRTILINKNKENEIMGEEVDQKANTLSLNNADNSNAEKEGLTSTNHYNELKNMGDTIKYQDDIEFLLSNSKSNDNTTVPINEYFKKLLNLSLMIINDEEFFQYAKRYFKKEIIKLSFAQFRSDFPELILLQGYLLHKVSESQSDFPPSFDNFSIELSKDDGKIRTKKNKHIKKLSHLNFEDFLRKTQFKTGLYYSLSLWEMHGNLSLDIIKRISILASNKDLFSRHVKTFIPLLEKLITASEFCHMYIEQPEMFDSLISNLNNQFKDMLDDDSLIKILILLTNMEVHNYTLWKEADMIFQSSMNTILESIHPLTDAKVDNILLHLGLCLNICSRENSRLKLDGKLWYDMKTIFVKMIRDGSDTENRLVQGLFYLNFSFLIKQRKENSNLDPGELNLLLVELEAFKSETSQFNEGISNKIEIALNYLKSIYTSERITI</sequence>
<protein>
    <recommendedName>
        <fullName>Protein RAD61</fullName>
    </recommendedName>
    <alternativeName>
        <fullName>Radiation sensitivity protein 61</fullName>
    </alternativeName>
</protein>
<keyword id="KW-0539">Nucleus</keyword>
<keyword id="KW-1185">Reference proteome</keyword>
<accession>Q99359</accession>
<accession>D6VS00</accession>
<reference key="1">
    <citation type="journal article" date="1996" name="Yeast">
        <title>Sequencing and analysis of a 35.4 kb region on the right arm of chromosome IV from Saccharomyces cerevisiae reveal 23 open reading frames.</title>
        <authorList>
            <person name="Eide L.G."/>
            <person name="Sander C."/>
            <person name="Prydz H."/>
        </authorList>
    </citation>
    <scope>NUCLEOTIDE SEQUENCE [GENOMIC DNA]</scope>
</reference>
<reference key="2">
    <citation type="journal article" date="1997" name="Nature">
        <title>The nucleotide sequence of Saccharomyces cerevisiae chromosome IV.</title>
        <authorList>
            <person name="Jacq C."/>
            <person name="Alt-Moerbe J."/>
            <person name="Andre B."/>
            <person name="Arnold W."/>
            <person name="Bahr A."/>
            <person name="Ballesta J.P.G."/>
            <person name="Bargues M."/>
            <person name="Baron L."/>
            <person name="Becker A."/>
            <person name="Biteau N."/>
            <person name="Bloecker H."/>
            <person name="Blugeon C."/>
            <person name="Boskovic J."/>
            <person name="Brandt P."/>
            <person name="Brueckner M."/>
            <person name="Buitrago M.J."/>
            <person name="Coster F."/>
            <person name="Delaveau T."/>
            <person name="del Rey F."/>
            <person name="Dujon B."/>
            <person name="Eide L.G."/>
            <person name="Garcia-Cantalejo J.M."/>
            <person name="Goffeau A."/>
            <person name="Gomez-Peris A."/>
            <person name="Granotier C."/>
            <person name="Hanemann V."/>
            <person name="Hankeln T."/>
            <person name="Hoheisel J.D."/>
            <person name="Jaeger W."/>
            <person name="Jimenez A."/>
            <person name="Jonniaux J.-L."/>
            <person name="Kraemer C."/>
            <person name="Kuester H."/>
            <person name="Laamanen P."/>
            <person name="Legros Y."/>
            <person name="Louis E.J."/>
            <person name="Moeller-Rieker S."/>
            <person name="Monnet A."/>
            <person name="Moro M."/>
            <person name="Mueller-Auer S."/>
            <person name="Nussbaumer B."/>
            <person name="Paricio N."/>
            <person name="Paulin L."/>
            <person name="Perea J."/>
            <person name="Perez-Alonso M."/>
            <person name="Perez-Ortin J.E."/>
            <person name="Pohl T.M."/>
            <person name="Prydz H."/>
            <person name="Purnelle B."/>
            <person name="Rasmussen S.W."/>
            <person name="Remacha M.A."/>
            <person name="Revuelta J.L."/>
            <person name="Rieger M."/>
            <person name="Salom D."/>
            <person name="Saluz H.P."/>
            <person name="Saiz J.E."/>
            <person name="Saren A.-M."/>
            <person name="Schaefer M."/>
            <person name="Scharfe M."/>
            <person name="Schmidt E.R."/>
            <person name="Schneider C."/>
            <person name="Scholler P."/>
            <person name="Schwarz S."/>
            <person name="Soler-Mira A."/>
            <person name="Urrestarazu L.A."/>
            <person name="Verhasselt P."/>
            <person name="Vissers S."/>
            <person name="Voet M."/>
            <person name="Volckaert G."/>
            <person name="Wagner G."/>
            <person name="Wambutt R."/>
            <person name="Wedler E."/>
            <person name="Wedler H."/>
            <person name="Woelfl S."/>
            <person name="Harris D.E."/>
            <person name="Bowman S."/>
            <person name="Brown D."/>
            <person name="Churcher C.M."/>
            <person name="Connor R."/>
            <person name="Dedman K."/>
            <person name="Gentles S."/>
            <person name="Hamlin N."/>
            <person name="Hunt S."/>
            <person name="Jones L."/>
            <person name="McDonald S."/>
            <person name="Murphy L.D."/>
            <person name="Niblett D."/>
            <person name="Odell C."/>
            <person name="Oliver K."/>
            <person name="Rajandream M.A."/>
            <person name="Richards C."/>
            <person name="Shore L."/>
            <person name="Walsh S.V."/>
            <person name="Barrell B.G."/>
            <person name="Dietrich F.S."/>
            <person name="Mulligan J.T."/>
            <person name="Allen E."/>
            <person name="Araujo R."/>
            <person name="Aviles E."/>
            <person name="Berno A."/>
            <person name="Carpenter J."/>
            <person name="Chen E."/>
            <person name="Cherry J.M."/>
            <person name="Chung E."/>
            <person name="Duncan M."/>
            <person name="Hunicke-Smith S."/>
            <person name="Hyman R.W."/>
            <person name="Komp C."/>
            <person name="Lashkari D."/>
            <person name="Lew H."/>
            <person name="Lin D."/>
            <person name="Mosedale D."/>
            <person name="Nakahara K."/>
            <person name="Namath A."/>
            <person name="Oefner P."/>
            <person name="Oh C."/>
            <person name="Petel F.X."/>
            <person name="Roberts D."/>
            <person name="Schramm S."/>
            <person name="Schroeder M."/>
            <person name="Shogren T."/>
            <person name="Shroff N."/>
            <person name="Winant A."/>
            <person name="Yelton M.A."/>
            <person name="Botstein D."/>
            <person name="Davis R.W."/>
            <person name="Johnston M."/>
            <person name="Andrews S."/>
            <person name="Brinkman R."/>
            <person name="Cooper J."/>
            <person name="Ding H."/>
            <person name="Du Z."/>
            <person name="Favello A."/>
            <person name="Fulton L."/>
            <person name="Gattung S."/>
            <person name="Greco T."/>
            <person name="Hallsworth K."/>
            <person name="Hawkins J."/>
            <person name="Hillier L.W."/>
            <person name="Jier M."/>
            <person name="Johnson D."/>
            <person name="Johnston L."/>
            <person name="Kirsten J."/>
            <person name="Kucaba T."/>
            <person name="Langston Y."/>
            <person name="Latreille P."/>
            <person name="Le T."/>
            <person name="Mardis E."/>
            <person name="Menezes S."/>
            <person name="Miller N."/>
            <person name="Nhan M."/>
            <person name="Pauley A."/>
            <person name="Peluso D."/>
            <person name="Rifkin L."/>
            <person name="Riles L."/>
            <person name="Taich A."/>
            <person name="Trevaskis E."/>
            <person name="Vignati D."/>
            <person name="Wilcox L."/>
            <person name="Wohldman P."/>
            <person name="Vaudin M."/>
            <person name="Wilson R."/>
            <person name="Waterston R."/>
            <person name="Albermann K."/>
            <person name="Hani J."/>
            <person name="Heumann K."/>
            <person name="Kleine K."/>
            <person name="Mewes H.-W."/>
            <person name="Zollner A."/>
            <person name="Zaccaria P."/>
        </authorList>
    </citation>
    <scope>NUCLEOTIDE SEQUENCE [LARGE SCALE GENOMIC DNA]</scope>
    <source>
        <strain>ATCC 204508 / S288c</strain>
    </source>
</reference>
<reference key="3">
    <citation type="journal article" date="2014" name="G3 (Bethesda)">
        <title>The reference genome sequence of Saccharomyces cerevisiae: Then and now.</title>
        <authorList>
            <person name="Engel S.R."/>
            <person name="Dietrich F.S."/>
            <person name="Fisk D.G."/>
            <person name="Binkley G."/>
            <person name="Balakrishnan R."/>
            <person name="Costanzo M.C."/>
            <person name="Dwight S.S."/>
            <person name="Hitz B.C."/>
            <person name="Karra K."/>
            <person name="Nash R.S."/>
            <person name="Weng S."/>
            <person name="Wong E.D."/>
            <person name="Lloyd P."/>
            <person name="Skrzypek M.S."/>
            <person name="Miyasato S.R."/>
            <person name="Simison M."/>
            <person name="Cherry J.M."/>
        </authorList>
    </citation>
    <scope>GENOME REANNOTATION</scope>
    <source>
        <strain>ATCC 204508 / S288c</strain>
    </source>
</reference>
<reference key="4">
    <citation type="journal article" date="2003" name="Nature">
        <title>Global analysis of protein localization in budding yeast.</title>
        <authorList>
            <person name="Huh W.-K."/>
            <person name="Falvo J.V."/>
            <person name="Gerke L.C."/>
            <person name="Carroll A.S."/>
            <person name="Howson R.W."/>
            <person name="Weissman J.S."/>
            <person name="O'Shea E.K."/>
        </authorList>
    </citation>
    <scope>SUBCELLULAR LOCATION [LARGE SCALE ANALYSIS]</scope>
</reference>
<reference key="5">
    <citation type="journal article" date="2003" name="Nature">
        <title>Global analysis of protein expression in yeast.</title>
        <authorList>
            <person name="Ghaemmaghami S."/>
            <person name="Huh W.-K."/>
            <person name="Bower K."/>
            <person name="Howson R.W."/>
            <person name="Belle A."/>
            <person name="Dephoure N."/>
            <person name="O'Shea E.K."/>
            <person name="Weissman J.S."/>
        </authorList>
    </citation>
    <scope>LEVEL OF PROTEIN EXPRESSION [LARGE SCALE ANALYSIS]</scope>
</reference>
<reference key="6">
    <citation type="journal article" date="2003" name="Radiat. Res.">
        <title>Use of a genome-wide approach to identify new genes that control resistance of Saccharomyces cerevisiae to ionizing radiation.</title>
        <authorList>
            <person name="Game J.C."/>
            <person name="Birrell G.W."/>
            <person name="Brown J.A."/>
            <person name="Shibata T."/>
            <person name="Baccari C."/>
            <person name="Chu A.M."/>
            <person name="Williamson M.S."/>
            <person name="Brown J.M."/>
        </authorList>
    </citation>
    <scope>FUNCTION</scope>
</reference>
<dbReference type="EMBL" id="X95966">
    <property type="protein sequence ID" value="CAA65206.1"/>
    <property type="molecule type" value="Genomic_DNA"/>
</dbReference>
<dbReference type="EMBL" id="Z48008">
    <property type="protein sequence ID" value="CAA88074.1"/>
    <property type="molecule type" value="Genomic_DNA"/>
</dbReference>
<dbReference type="EMBL" id="Z74310">
    <property type="protein sequence ID" value="CAA98834.1"/>
    <property type="molecule type" value="Genomic_DNA"/>
</dbReference>
<dbReference type="EMBL" id="BK006938">
    <property type="protein sequence ID" value="DAA11860.1"/>
    <property type="molecule type" value="Genomic_DNA"/>
</dbReference>
<dbReference type="PIR" id="S50995">
    <property type="entry name" value="S50995"/>
</dbReference>
<dbReference type="RefSeq" id="NP_010297.1">
    <property type="nucleotide sequence ID" value="NM_001180322.1"/>
</dbReference>
<dbReference type="SMR" id="Q99359"/>
<dbReference type="BioGRID" id="32065">
    <property type="interactions" value="198"/>
</dbReference>
<dbReference type="FunCoup" id="Q99359">
    <property type="interactions" value="26"/>
</dbReference>
<dbReference type="IntAct" id="Q99359">
    <property type="interactions" value="3"/>
</dbReference>
<dbReference type="MINT" id="Q99359"/>
<dbReference type="STRING" id="4932.YDR014W"/>
<dbReference type="iPTMnet" id="Q99359"/>
<dbReference type="PaxDb" id="4932-YDR014W"/>
<dbReference type="PeptideAtlas" id="Q99359"/>
<dbReference type="EnsemblFungi" id="YDR014W_mRNA">
    <property type="protein sequence ID" value="YDR014W"/>
    <property type="gene ID" value="YDR014W"/>
</dbReference>
<dbReference type="GeneID" id="851577"/>
<dbReference type="KEGG" id="sce:YDR014W"/>
<dbReference type="AGR" id="SGD:S000002421"/>
<dbReference type="SGD" id="S000002421">
    <property type="gene designation" value="RAD61"/>
</dbReference>
<dbReference type="VEuPathDB" id="FungiDB:YDR014W"/>
<dbReference type="eggNOG" id="ENOG502RY5C">
    <property type="taxonomic scope" value="Eukaryota"/>
</dbReference>
<dbReference type="HOGENOM" id="CLU_460918_0_0_1"/>
<dbReference type="InParanoid" id="Q99359"/>
<dbReference type="OMA" id="KHDANIT"/>
<dbReference type="OrthoDB" id="4069585at2759"/>
<dbReference type="BioCyc" id="YEAST:G3O-29633-MONOMER"/>
<dbReference type="BioGRID-ORCS" id="851577">
    <property type="hits" value="6 hits in 10 CRISPR screens"/>
</dbReference>
<dbReference type="PRO" id="PR:Q99359"/>
<dbReference type="Proteomes" id="UP000002311">
    <property type="component" value="Chromosome IV"/>
</dbReference>
<dbReference type="RNAct" id="Q99359">
    <property type="molecule type" value="protein"/>
</dbReference>
<dbReference type="GO" id="GO:0005634">
    <property type="term" value="C:nucleus"/>
    <property type="evidence" value="ECO:0007669"/>
    <property type="project" value="UniProtKB-SubCell"/>
</dbReference>
<dbReference type="GO" id="GO:0140588">
    <property type="term" value="P:chromatin looping"/>
    <property type="evidence" value="ECO:0000315"/>
    <property type="project" value="SGD"/>
</dbReference>
<dbReference type="GO" id="GO:0042138">
    <property type="term" value="P:meiotic DNA double-strand break formation"/>
    <property type="evidence" value="ECO:0000315"/>
    <property type="project" value="SGD"/>
</dbReference>
<dbReference type="GO" id="GO:0007064">
    <property type="term" value="P:mitotic sister chromatid cohesion"/>
    <property type="evidence" value="ECO:0000316"/>
    <property type="project" value="SGD"/>
</dbReference>
<dbReference type="GO" id="GO:1902340">
    <property type="term" value="P:negative regulation of chromosome condensation"/>
    <property type="evidence" value="ECO:0000315"/>
    <property type="project" value="SGD"/>
</dbReference>
<dbReference type="GO" id="GO:0034183">
    <property type="term" value="P:negative regulation of maintenance of mitotic sister chromatid cohesion"/>
    <property type="evidence" value="ECO:0000315"/>
    <property type="project" value="SGD"/>
</dbReference>
<dbReference type="FunFam" id="1.25.10.60:FF:000001">
    <property type="entry name" value="Rad61p"/>
    <property type="match status" value="1"/>
</dbReference>
<dbReference type="Gene3D" id="1.25.10.60">
    <property type="entry name" value="Rad61, Wapl domain"/>
    <property type="match status" value="1"/>
</dbReference>
<dbReference type="InterPro" id="IPR031550">
    <property type="entry name" value="Rad61_Wapl"/>
</dbReference>
<dbReference type="InterPro" id="IPR038496">
    <property type="entry name" value="Rad61_Wapl_sf"/>
</dbReference>
<dbReference type="Pfam" id="PF16997">
    <property type="entry name" value="Wap1"/>
    <property type="match status" value="1"/>
</dbReference>
<evidence type="ECO:0000256" key="1">
    <source>
        <dbReference type="SAM" id="MobiDB-lite"/>
    </source>
</evidence>
<evidence type="ECO:0000269" key="2">
    <source>
    </source>
</evidence>
<evidence type="ECO:0000269" key="3">
    <source>
    </source>
</evidence>
<evidence type="ECO:0000269" key="4">
    <source>
    </source>
</evidence>
<name>RAD61_YEAST</name>
<comment type="function">
    <text evidence="2">Involved in resistance to ionizing radiation.</text>
</comment>
<comment type="interaction">
    <interactant intactId="EBI-2082336">
        <id>Q99359</id>
    </interactant>
    <interactant intactId="EBI-17423">
        <id>P47037</id>
        <label>SMC3</label>
    </interactant>
    <organismsDiffer>false</organismsDiffer>
    <experiments>9</experiments>
</comment>
<comment type="subcellular location">
    <subcellularLocation>
        <location evidence="3">Nucleus</location>
    </subcellularLocation>
</comment>
<comment type="miscellaneous">
    <text evidence="4">Present with 721 molecules/cell in log phase SD medium.</text>
</comment>